<feature type="chain" id="PRO_0000357296" description="Very-long-chain 3-oxoacyl-CoA reductase">
    <location>
        <begin position="1"/>
        <end position="345"/>
    </location>
</feature>
<feature type="transmembrane region" description="Helical" evidence="4">
    <location>
        <begin position="26"/>
        <end position="46"/>
    </location>
</feature>
<feature type="active site" description="Proton donor" evidence="2">
    <location>
        <position position="219"/>
    </location>
</feature>
<feature type="active site" description="Lowers pKa of active site Tyr" evidence="2">
    <location>
        <position position="223"/>
    </location>
</feature>
<feature type="binding site" evidence="1">
    <location>
        <position position="71"/>
    </location>
    <ligand>
        <name>NADP(+)</name>
        <dbReference type="ChEBI" id="CHEBI:58349"/>
    </ligand>
</feature>
<feature type="binding site" evidence="1">
    <location>
        <position position="125"/>
    </location>
    <ligand>
        <name>NADP(+)</name>
        <dbReference type="ChEBI" id="CHEBI:58349"/>
    </ligand>
</feature>
<feature type="binding site" evidence="1">
    <location>
        <position position="133"/>
    </location>
    <ligand>
        <name>NADP(+)</name>
        <dbReference type="ChEBI" id="CHEBI:58349"/>
    </ligand>
</feature>
<feature type="binding site" evidence="2">
    <location>
        <position position="152"/>
    </location>
    <ligand>
        <name>NADP(+)</name>
        <dbReference type="ChEBI" id="CHEBI:58349"/>
    </ligand>
</feature>
<feature type="binding site" evidence="2">
    <location>
        <position position="219"/>
    </location>
    <ligand>
        <name>NADP(+)</name>
        <dbReference type="ChEBI" id="CHEBI:58349"/>
    </ligand>
</feature>
<feature type="binding site" evidence="2">
    <location>
        <position position="223"/>
    </location>
    <ligand>
        <name>NADP(+)</name>
        <dbReference type="ChEBI" id="CHEBI:58349"/>
    </ligand>
</feature>
<feature type="binding site" evidence="2">
    <location>
        <position position="252"/>
    </location>
    <ligand>
        <name>NADP(+)</name>
        <dbReference type="ChEBI" id="CHEBI:58349"/>
    </ligand>
</feature>
<feature type="binding site" evidence="1">
    <location>
        <position position="254"/>
    </location>
    <ligand>
        <name>NADP(+)</name>
        <dbReference type="ChEBI" id="CHEBI:58349"/>
    </ligand>
</feature>
<reference key="1">
    <citation type="journal article" date="2008" name="PLoS Genet.">
        <title>Genomic islands in the pathogenic filamentous fungus Aspergillus fumigatus.</title>
        <authorList>
            <person name="Fedorova N.D."/>
            <person name="Khaldi N."/>
            <person name="Joardar V.S."/>
            <person name="Maiti R."/>
            <person name="Amedeo P."/>
            <person name="Anderson M.J."/>
            <person name="Crabtree J."/>
            <person name="Silva J.C."/>
            <person name="Badger J.H."/>
            <person name="Albarraq A."/>
            <person name="Angiuoli S."/>
            <person name="Bussey H."/>
            <person name="Bowyer P."/>
            <person name="Cotty P.J."/>
            <person name="Dyer P.S."/>
            <person name="Egan A."/>
            <person name="Galens K."/>
            <person name="Fraser-Liggett C.M."/>
            <person name="Haas B.J."/>
            <person name="Inman J.M."/>
            <person name="Kent R."/>
            <person name="Lemieux S."/>
            <person name="Malavazi I."/>
            <person name="Orvis J."/>
            <person name="Roemer T."/>
            <person name="Ronning C.M."/>
            <person name="Sundaram J.P."/>
            <person name="Sutton G."/>
            <person name="Turner G."/>
            <person name="Venter J.C."/>
            <person name="White O.R."/>
            <person name="Whitty B.R."/>
            <person name="Youngman P."/>
            <person name="Wolfe K.H."/>
            <person name="Goldman G.H."/>
            <person name="Wortman J.R."/>
            <person name="Jiang B."/>
            <person name="Denning D.W."/>
            <person name="Nierman W.C."/>
        </authorList>
    </citation>
    <scope>NUCLEOTIDE SEQUENCE [LARGE SCALE GENOMIC DNA]</scope>
    <source>
        <strain>CBS 144.89 / FGSC A1163 / CEA10</strain>
    </source>
</reference>
<accession>B0XSI3</accession>
<proteinExistence type="inferred from homology"/>
<keyword id="KW-0256">Endoplasmic reticulum</keyword>
<keyword id="KW-0275">Fatty acid biosynthesis</keyword>
<keyword id="KW-0276">Fatty acid metabolism</keyword>
<keyword id="KW-0444">Lipid biosynthesis</keyword>
<keyword id="KW-0443">Lipid metabolism</keyword>
<keyword id="KW-0472">Membrane</keyword>
<keyword id="KW-0521">NADP</keyword>
<keyword id="KW-0560">Oxidoreductase</keyword>
<keyword id="KW-0812">Transmembrane</keyword>
<keyword id="KW-1133">Transmembrane helix</keyword>
<organism>
    <name type="scientific">Aspergillus fumigatus (strain CBS 144.89 / FGSC A1163 / CEA10)</name>
    <name type="common">Neosartorya fumigata</name>
    <dbReference type="NCBI Taxonomy" id="451804"/>
    <lineage>
        <taxon>Eukaryota</taxon>
        <taxon>Fungi</taxon>
        <taxon>Dikarya</taxon>
        <taxon>Ascomycota</taxon>
        <taxon>Pezizomycotina</taxon>
        <taxon>Eurotiomycetes</taxon>
        <taxon>Eurotiomycetidae</taxon>
        <taxon>Eurotiales</taxon>
        <taxon>Aspergillaceae</taxon>
        <taxon>Aspergillus</taxon>
        <taxon>Aspergillus subgen. Fumigati</taxon>
    </lineage>
</organism>
<name>MKAR_ASPFC</name>
<evidence type="ECO:0000250" key="1">
    <source>
        <dbReference type="UniProtKB" id="L0E2Z4"/>
    </source>
</evidence>
<evidence type="ECO:0000250" key="2">
    <source>
        <dbReference type="UniProtKB" id="O93868"/>
    </source>
</evidence>
<evidence type="ECO:0000250" key="3">
    <source>
        <dbReference type="UniProtKB" id="P38286"/>
    </source>
</evidence>
<evidence type="ECO:0000255" key="4">
    <source>
        <dbReference type="HAMAP-Rule" id="MF_03107"/>
    </source>
</evidence>
<comment type="function">
    <text evidence="4">Component of the microsomal membrane bound fatty acid elongation system, which produces the 26-carbon very long-chain fatty acids (VLCFA) from palmitate. Catalyzes the reduction of the 3-ketoacyl-CoA intermediate that is formed in each cycle of fatty acid elongation. VLCFAs serve as precursors for ceramide and sphingolipids.</text>
</comment>
<comment type="catalytic activity">
    <reaction evidence="4">
        <text>a very-long-chain (3R)-3-hydroxyacyl-CoA + NADP(+) = a very-long-chain 3-oxoacyl-CoA + NADPH + H(+)</text>
        <dbReference type="Rhea" id="RHEA:48680"/>
        <dbReference type="ChEBI" id="CHEBI:15378"/>
        <dbReference type="ChEBI" id="CHEBI:57783"/>
        <dbReference type="ChEBI" id="CHEBI:58349"/>
        <dbReference type="ChEBI" id="CHEBI:85440"/>
        <dbReference type="ChEBI" id="CHEBI:90725"/>
        <dbReference type="EC" id="1.1.1.330"/>
    </reaction>
</comment>
<comment type="pathway">
    <text evidence="3">Lipid metabolism; fatty acid biosynthesis.</text>
</comment>
<comment type="subcellular location">
    <subcellularLocation>
        <location evidence="4">Endoplasmic reticulum membrane</location>
        <topology evidence="4">Single-pass membrane protein</topology>
    </subcellularLocation>
</comment>
<comment type="similarity">
    <text evidence="4">Belongs to the short-chain dehydrogenases/reductases (SDR) family.</text>
</comment>
<gene>
    <name type="ORF">AFUB_027290</name>
</gene>
<sequence length="345" mass="37326">MEFLSKYTACLSNWGLNLEPGLQTVGAAVLLTTGTLFIASRVLTFVRVLLSLFVLPGKPLRSFGPKGSWAVVTGASDGLGKEFSLQLARAGFNIVLVSRTASKLTTLAEEITTKHSVQTKTLAMDYAANNDADYEELKAIVDGLDVAVLINNVGKSHDIPTPFALTPEDEMTDIVTINCLGTLRTTQLIIPGMMQRKRGLVLTMGSFGGLLPTPLLATYSGSKAFLQQWSTSLGSELEPYGITVELVQAYLITSAMSKVRRTSATIPDPRAFVKAVLSKIGRNGGSPGYAYSSSPYWSHGLMAWFLTCVMQPMGKLVVGQNKSMHEAIRKRALRKAEREKGKKST</sequence>
<protein>
    <recommendedName>
        <fullName evidence="4">Very-long-chain 3-oxoacyl-CoA reductase</fullName>
        <ecNumber evidence="4">1.1.1.330</ecNumber>
    </recommendedName>
    <alternativeName>
        <fullName evidence="4">3-ketoacyl-CoA reductase</fullName>
        <shortName evidence="4">3-ketoreductase</shortName>
        <shortName evidence="4">KAR</shortName>
    </alternativeName>
    <alternativeName>
        <fullName evidence="4">Microsomal beta-keto-reductase</fullName>
    </alternativeName>
</protein>
<dbReference type="EC" id="1.1.1.330" evidence="4"/>
<dbReference type="EMBL" id="DS499595">
    <property type="protein sequence ID" value="EDP54669.1"/>
    <property type="molecule type" value="Genomic_DNA"/>
</dbReference>
<dbReference type="SMR" id="B0XSI3"/>
<dbReference type="EnsemblFungi" id="EDP54669">
    <property type="protein sequence ID" value="EDP54669"/>
    <property type="gene ID" value="AFUB_027290"/>
</dbReference>
<dbReference type="VEuPathDB" id="FungiDB:AFUB_027290"/>
<dbReference type="HOGENOM" id="CLU_010194_38_0_1"/>
<dbReference type="OrthoDB" id="48709at5052"/>
<dbReference type="PhylomeDB" id="B0XSI3"/>
<dbReference type="UniPathway" id="UPA00094"/>
<dbReference type="Proteomes" id="UP000001699">
    <property type="component" value="Unassembled WGS sequence"/>
</dbReference>
<dbReference type="GO" id="GO:0005789">
    <property type="term" value="C:endoplasmic reticulum membrane"/>
    <property type="evidence" value="ECO:0007669"/>
    <property type="project" value="UniProtKB-SubCell"/>
</dbReference>
<dbReference type="GO" id="GO:0045703">
    <property type="term" value="F:ketoreductase activity"/>
    <property type="evidence" value="ECO:0007669"/>
    <property type="project" value="UniProtKB-UniRule"/>
</dbReference>
<dbReference type="GO" id="GO:0141040">
    <property type="term" value="F:very-long-chain 3-oxoacyl-CoA reductase activity"/>
    <property type="evidence" value="ECO:0007669"/>
    <property type="project" value="UniProtKB-EC"/>
</dbReference>
<dbReference type="GO" id="GO:0030497">
    <property type="term" value="P:fatty acid elongation"/>
    <property type="evidence" value="ECO:0007669"/>
    <property type="project" value="UniProtKB-UniRule"/>
</dbReference>
<dbReference type="GO" id="GO:0044550">
    <property type="term" value="P:secondary metabolite biosynthetic process"/>
    <property type="evidence" value="ECO:0007669"/>
    <property type="project" value="UniProtKB-ARBA"/>
</dbReference>
<dbReference type="GO" id="GO:0030148">
    <property type="term" value="P:sphingolipid biosynthetic process"/>
    <property type="evidence" value="ECO:0007669"/>
    <property type="project" value="EnsemblFungi"/>
</dbReference>
<dbReference type="GO" id="GO:0042761">
    <property type="term" value="P:very long-chain fatty acid biosynthetic process"/>
    <property type="evidence" value="ECO:0007669"/>
    <property type="project" value="EnsemblFungi"/>
</dbReference>
<dbReference type="CDD" id="cd05356">
    <property type="entry name" value="17beta-HSD1_like_SDR_c"/>
    <property type="match status" value="1"/>
</dbReference>
<dbReference type="FunFam" id="3.40.50.720:FF:000317">
    <property type="entry name" value="Very-long-chain 3-oxoacyl-CoA reductase"/>
    <property type="match status" value="1"/>
</dbReference>
<dbReference type="Gene3D" id="3.40.50.720">
    <property type="entry name" value="NAD(P)-binding Rossmann-like Domain"/>
    <property type="match status" value="1"/>
</dbReference>
<dbReference type="HAMAP" id="MF_03107">
    <property type="entry name" value="3_ketoreductase"/>
    <property type="match status" value="1"/>
</dbReference>
<dbReference type="InterPro" id="IPR027533">
    <property type="entry name" value="3_ketoreductase_fungal"/>
</dbReference>
<dbReference type="InterPro" id="IPR036291">
    <property type="entry name" value="NAD(P)-bd_dom_sf"/>
</dbReference>
<dbReference type="InterPro" id="IPR020904">
    <property type="entry name" value="Sc_DH/Rdtase_CS"/>
</dbReference>
<dbReference type="InterPro" id="IPR002347">
    <property type="entry name" value="SDR_fam"/>
</dbReference>
<dbReference type="PANTHER" id="PTHR43086:SF2">
    <property type="entry name" value="HYDROXYSTEROID DEHYDROGENASE-LIKE PROTEIN 1"/>
    <property type="match status" value="1"/>
</dbReference>
<dbReference type="PANTHER" id="PTHR43086">
    <property type="entry name" value="VERY-LONG-CHAIN 3-OXOOACYL-COA REDUCTASE"/>
    <property type="match status" value="1"/>
</dbReference>
<dbReference type="Pfam" id="PF00106">
    <property type="entry name" value="adh_short"/>
    <property type="match status" value="1"/>
</dbReference>
<dbReference type="PIRSF" id="PIRSF000126">
    <property type="entry name" value="11-beta-HSD1"/>
    <property type="match status" value="1"/>
</dbReference>
<dbReference type="PRINTS" id="PR00081">
    <property type="entry name" value="GDHRDH"/>
</dbReference>
<dbReference type="SUPFAM" id="SSF51735">
    <property type="entry name" value="NAD(P)-binding Rossmann-fold domains"/>
    <property type="match status" value="1"/>
</dbReference>
<dbReference type="PROSITE" id="PS00061">
    <property type="entry name" value="ADH_SHORT"/>
    <property type="match status" value="1"/>
</dbReference>